<name>LYPA1_MOUSE</name>
<keyword id="KW-0007">Acetylation</keyword>
<keyword id="KW-0025">Alternative splicing</keyword>
<keyword id="KW-1003">Cell membrane</keyword>
<keyword id="KW-0963">Cytoplasm</keyword>
<keyword id="KW-0903">Direct protein sequencing</keyword>
<keyword id="KW-0256">Endoplasmic reticulum</keyword>
<keyword id="KW-0276">Fatty acid metabolism</keyword>
<keyword id="KW-0378">Hydrolase</keyword>
<keyword id="KW-0443">Lipid metabolism</keyword>
<keyword id="KW-0472">Membrane</keyword>
<keyword id="KW-0539">Nucleus</keyword>
<keyword id="KW-1185">Reference proteome</keyword>
<proteinExistence type="evidence at protein level"/>
<organism>
    <name type="scientific">Mus musculus</name>
    <name type="common">Mouse</name>
    <dbReference type="NCBI Taxonomy" id="10090"/>
    <lineage>
        <taxon>Eukaryota</taxon>
        <taxon>Metazoa</taxon>
        <taxon>Chordata</taxon>
        <taxon>Craniata</taxon>
        <taxon>Vertebrata</taxon>
        <taxon>Euteleostomi</taxon>
        <taxon>Mammalia</taxon>
        <taxon>Eutheria</taxon>
        <taxon>Euarchontoglires</taxon>
        <taxon>Glires</taxon>
        <taxon>Rodentia</taxon>
        <taxon>Myomorpha</taxon>
        <taxon>Muroidea</taxon>
        <taxon>Muridae</taxon>
        <taxon>Murinae</taxon>
        <taxon>Mus</taxon>
        <taxon>Mus</taxon>
    </lineage>
</organism>
<dbReference type="EC" id="3.1.2.-"/>
<dbReference type="EC" id="3.1.2.22" evidence="1"/>
<dbReference type="EMBL" id="U89352">
    <property type="protein sequence ID" value="AAB48627.1"/>
    <property type="molecule type" value="mRNA"/>
</dbReference>
<dbReference type="EMBL" id="AK002674">
    <property type="protein sequence ID" value="BAB22276.1"/>
    <property type="molecule type" value="mRNA"/>
</dbReference>
<dbReference type="EMBL" id="AK050549">
    <property type="protein sequence ID" value="BAC34318.1"/>
    <property type="status" value="ALT_INIT"/>
    <property type="molecule type" value="mRNA"/>
</dbReference>
<dbReference type="EMBL" id="AK146874">
    <property type="protein sequence ID" value="BAE27497.1"/>
    <property type="molecule type" value="mRNA"/>
</dbReference>
<dbReference type="EMBL" id="AK167231">
    <property type="protein sequence ID" value="BAE39355.1"/>
    <property type="molecule type" value="mRNA"/>
</dbReference>
<dbReference type="EMBL" id="BC013536">
    <property type="protein sequence ID" value="AAH13536.1"/>
    <property type="molecule type" value="mRNA"/>
</dbReference>
<dbReference type="EMBL" id="BC052848">
    <property type="protein sequence ID" value="AAH52848.1"/>
    <property type="molecule type" value="mRNA"/>
</dbReference>
<dbReference type="CCDS" id="CCDS14806.1">
    <molecule id="P97823-1"/>
</dbReference>
<dbReference type="RefSeq" id="NP_032892.1">
    <molecule id="P97823-1"/>
    <property type="nucleotide sequence ID" value="NM_008866.4"/>
</dbReference>
<dbReference type="SMR" id="P97823"/>
<dbReference type="BioGRID" id="202216">
    <property type="interactions" value="8"/>
</dbReference>
<dbReference type="FunCoup" id="P97823">
    <property type="interactions" value="3378"/>
</dbReference>
<dbReference type="STRING" id="10090.ENSMUSP00000027036"/>
<dbReference type="BindingDB" id="P97823"/>
<dbReference type="ChEMBL" id="CHEMBL3259479"/>
<dbReference type="ESTHER" id="mouse-lypla1">
    <property type="family name" value="LYsophospholipase_carboxylesterase"/>
</dbReference>
<dbReference type="GlyGen" id="P97823">
    <property type="glycosylation" value="2 sites, 1 O-linked glycan (2 sites)"/>
</dbReference>
<dbReference type="iPTMnet" id="P97823"/>
<dbReference type="PhosphoSitePlus" id="P97823"/>
<dbReference type="SwissPalm" id="P97823"/>
<dbReference type="jPOST" id="P97823"/>
<dbReference type="PaxDb" id="10090-ENSMUSP00000027036"/>
<dbReference type="PeptideAtlas" id="P97823"/>
<dbReference type="ProteomicsDB" id="252687">
    <molecule id="P97823-1"/>
</dbReference>
<dbReference type="ProteomicsDB" id="252688">
    <molecule id="P97823-2"/>
</dbReference>
<dbReference type="Pumba" id="P97823"/>
<dbReference type="Antibodypedia" id="24492">
    <property type="antibodies" value="310 antibodies from 33 providers"/>
</dbReference>
<dbReference type="DNASU" id="18777"/>
<dbReference type="Ensembl" id="ENSMUST00000027036.11">
    <molecule id="P97823-1"/>
    <property type="protein sequence ID" value="ENSMUSP00000027036.5"/>
    <property type="gene ID" value="ENSMUSG00000025903.15"/>
</dbReference>
<dbReference type="Ensembl" id="ENSMUST00000150971.8">
    <molecule id="P97823-2"/>
    <property type="protein sequence ID" value="ENSMUSP00000137248.3"/>
    <property type="gene ID" value="ENSMUSG00000025903.15"/>
</dbReference>
<dbReference type="GeneID" id="18777"/>
<dbReference type="KEGG" id="mmu:18777"/>
<dbReference type="UCSC" id="uc007afh.1">
    <molecule id="P97823-1"/>
    <property type="organism name" value="mouse"/>
</dbReference>
<dbReference type="AGR" id="MGI:1344588"/>
<dbReference type="CTD" id="10434"/>
<dbReference type="MGI" id="MGI:1344588">
    <property type="gene designation" value="Lypla1"/>
</dbReference>
<dbReference type="VEuPathDB" id="HostDB:ENSMUSG00000025903"/>
<dbReference type="eggNOG" id="KOG2112">
    <property type="taxonomic scope" value="Eukaryota"/>
</dbReference>
<dbReference type="GeneTree" id="ENSGT00940000154185"/>
<dbReference type="HOGENOM" id="CLU_049413_3_5_1"/>
<dbReference type="InParanoid" id="P97823"/>
<dbReference type="OMA" id="LMFRTYN"/>
<dbReference type="OrthoDB" id="2418081at2759"/>
<dbReference type="PhylomeDB" id="P97823"/>
<dbReference type="TreeFam" id="TF314619"/>
<dbReference type="Reactome" id="R-MMU-203615">
    <property type="pathway name" value="eNOS activation"/>
</dbReference>
<dbReference type="Reactome" id="R-MMU-9648002">
    <property type="pathway name" value="RAS processing"/>
</dbReference>
<dbReference type="BioGRID-ORCS" id="18777">
    <property type="hits" value="5 hits in 79 CRISPR screens"/>
</dbReference>
<dbReference type="ChiTaRS" id="Lypla1">
    <property type="organism name" value="mouse"/>
</dbReference>
<dbReference type="PRO" id="PR:P97823"/>
<dbReference type="Proteomes" id="UP000000589">
    <property type="component" value="Chromosome 1"/>
</dbReference>
<dbReference type="RNAct" id="P97823">
    <property type="molecule type" value="protein"/>
</dbReference>
<dbReference type="Bgee" id="ENSMUSG00000025903">
    <property type="expression patterns" value="Expressed in right kidney and 261 other cell types or tissues"/>
</dbReference>
<dbReference type="ExpressionAtlas" id="P97823">
    <property type="expression patterns" value="baseline and differential"/>
</dbReference>
<dbReference type="GO" id="GO:0005829">
    <property type="term" value="C:cytosol"/>
    <property type="evidence" value="ECO:0000314"/>
    <property type="project" value="MGI"/>
</dbReference>
<dbReference type="GO" id="GO:0005783">
    <property type="term" value="C:endoplasmic reticulum"/>
    <property type="evidence" value="ECO:0000250"/>
    <property type="project" value="UniProtKB"/>
</dbReference>
<dbReference type="GO" id="GO:0005739">
    <property type="term" value="C:mitochondrion"/>
    <property type="evidence" value="ECO:0007005"/>
    <property type="project" value="MGI"/>
</dbReference>
<dbReference type="GO" id="GO:0031965">
    <property type="term" value="C:nuclear membrane"/>
    <property type="evidence" value="ECO:0000250"/>
    <property type="project" value="UniProtKB"/>
</dbReference>
<dbReference type="GO" id="GO:0005654">
    <property type="term" value="C:nucleoplasm"/>
    <property type="evidence" value="ECO:0007669"/>
    <property type="project" value="Ensembl"/>
</dbReference>
<dbReference type="GO" id="GO:0005886">
    <property type="term" value="C:plasma membrane"/>
    <property type="evidence" value="ECO:0000250"/>
    <property type="project" value="UniProtKB"/>
</dbReference>
<dbReference type="GO" id="GO:0004622">
    <property type="term" value="F:lysophospholipase activity"/>
    <property type="evidence" value="ECO:0000250"/>
    <property type="project" value="UniProtKB"/>
</dbReference>
<dbReference type="GO" id="GO:0008474">
    <property type="term" value="F:palmitoyl-(protein) hydrolase activity"/>
    <property type="evidence" value="ECO:0000314"/>
    <property type="project" value="UniProtKB"/>
</dbReference>
<dbReference type="GO" id="GO:0004620">
    <property type="term" value="F:phospholipase activity"/>
    <property type="evidence" value="ECO:0000250"/>
    <property type="project" value="UniProtKB"/>
</dbReference>
<dbReference type="GO" id="GO:0006631">
    <property type="term" value="P:fatty acid metabolic process"/>
    <property type="evidence" value="ECO:0007669"/>
    <property type="project" value="UniProtKB-KW"/>
</dbReference>
<dbReference type="GO" id="GO:0015908">
    <property type="term" value="P:fatty acid transport"/>
    <property type="evidence" value="ECO:0007669"/>
    <property type="project" value="Ensembl"/>
</dbReference>
<dbReference type="GO" id="GO:1905336">
    <property type="term" value="P:negative regulation of aggrephagy"/>
    <property type="evidence" value="ECO:0007669"/>
    <property type="project" value="Ensembl"/>
</dbReference>
<dbReference type="GO" id="GO:0042997">
    <property type="term" value="P:negative regulation of Golgi to plasma membrane protein transport"/>
    <property type="evidence" value="ECO:0000315"/>
    <property type="project" value="MGI"/>
</dbReference>
<dbReference type="GO" id="GO:0002084">
    <property type="term" value="P:protein depalmitoylation"/>
    <property type="evidence" value="ECO:0000314"/>
    <property type="project" value="UniProtKB"/>
</dbReference>
<dbReference type="FunFam" id="3.40.50.1820:FF:000010">
    <property type="entry name" value="Acyl-protein thioesterase 2"/>
    <property type="match status" value="1"/>
</dbReference>
<dbReference type="Gene3D" id="3.40.50.1820">
    <property type="entry name" value="alpha/beta hydrolase"/>
    <property type="match status" value="1"/>
</dbReference>
<dbReference type="InterPro" id="IPR029058">
    <property type="entry name" value="AB_hydrolase_fold"/>
</dbReference>
<dbReference type="InterPro" id="IPR050565">
    <property type="entry name" value="LYPA1-2/EST-like"/>
</dbReference>
<dbReference type="InterPro" id="IPR003140">
    <property type="entry name" value="PLipase/COase/thioEstase"/>
</dbReference>
<dbReference type="PANTHER" id="PTHR10655:SF22">
    <property type="entry name" value="ACYL-PROTEIN THIOESTERASE 1"/>
    <property type="match status" value="1"/>
</dbReference>
<dbReference type="PANTHER" id="PTHR10655">
    <property type="entry name" value="LYSOPHOSPHOLIPASE-RELATED"/>
    <property type="match status" value="1"/>
</dbReference>
<dbReference type="Pfam" id="PF02230">
    <property type="entry name" value="Abhydrolase_2"/>
    <property type="match status" value="1"/>
</dbReference>
<dbReference type="SUPFAM" id="SSF53474">
    <property type="entry name" value="alpha/beta-Hydrolases"/>
    <property type="match status" value="1"/>
</dbReference>
<accession>P97823</accession>
<accession>Q3TJZ0</accession>
<accession>Q7TPX1</accession>
<accession>Q8BWM6</accession>
<comment type="function">
    <text evidence="1 2 3">Acts as an acyl-protein thioesterase (By similarity). Hydrolyzes fatty acids from S-acylated cysteine residues in proteins such as trimeric G alpha proteins or HRAS (By similarity). Acts as a palmitoyl thioesterase that catalyzes depalmitoylation of proteins, such as ADRB2, KCNMA1 and SQSTM1 (By similarity). Acts as a negative regulator of autophagy by mediating palmitoylation of SQSTM1, decreasing affinity between SQSTM1 and ATG8 proteins and recruitment of ubiquitinated cargo proteins to autophagosomes (By similarity). Acts as a lysophospholipase and hydrolyzes lysophosphatidylcholine (lyso-PC) (By similarity). Also hydrolyzes lysophosphatidylethanolamine (lyso-PE), lysophosphatidylinositol (lyso-PI) and lysophosphatidylserine (lyso-PS) (PubMed:9139730). Has much higher thioesterase activity than lysophospholipase activity (By similarity). Contributes to the production of lysophosphatidic acid (LPA) during blood coagulation by recognizing and cleaving plasma phospholipids to generate lysophospholipids which in turn act as substrates for ENPP2 to produce LPA (By similarity).</text>
</comment>
<comment type="catalytic activity">
    <reaction evidence="1">
        <text>S-hexadecanoyl-L-cysteinyl-[protein] + H2O = L-cysteinyl-[protein] + hexadecanoate + H(+)</text>
        <dbReference type="Rhea" id="RHEA:19233"/>
        <dbReference type="Rhea" id="RHEA-COMP:10131"/>
        <dbReference type="Rhea" id="RHEA-COMP:11032"/>
        <dbReference type="ChEBI" id="CHEBI:7896"/>
        <dbReference type="ChEBI" id="CHEBI:15377"/>
        <dbReference type="ChEBI" id="CHEBI:15378"/>
        <dbReference type="ChEBI" id="CHEBI:29950"/>
        <dbReference type="ChEBI" id="CHEBI:74151"/>
        <dbReference type="EC" id="3.1.2.22"/>
    </reaction>
</comment>
<comment type="catalytic activity">
    <reaction evidence="1">
        <text>1-hexadecanoyl-sn-glycero-3-phosphocholine + H2O = sn-glycerol 3-phosphocholine + hexadecanoate + H(+)</text>
        <dbReference type="Rhea" id="RHEA:40435"/>
        <dbReference type="ChEBI" id="CHEBI:7896"/>
        <dbReference type="ChEBI" id="CHEBI:15377"/>
        <dbReference type="ChEBI" id="CHEBI:15378"/>
        <dbReference type="ChEBI" id="CHEBI:16870"/>
        <dbReference type="ChEBI" id="CHEBI:72998"/>
    </reaction>
    <physiologicalReaction direction="left-to-right" evidence="1">
        <dbReference type="Rhea" id="RHEA:40436"/>
    </physiologicalReaction>
</comment>
<comment type="catalytic activity">
    <reaction evidence="1">
        <text>a 1-(9Z-octadecenoyl)-2-acyl-sn-glycero-3-phosphocholine + H2O = a 2-acyl-sn-glycero-3-phosphocholine + (9Z)-octadecenoate + H(+)</text>
        <dbReference type="Rhea" id="RHEA:41720"/>
        <dbReference type="ChEBI" id="CHEBI:15377"/>
        <dbReference type="ChEBI" id="CHEBI:15378"/>
        <dbReference type="ChEBI" id="CHEBI:30823"/>
        <dbReference type="ChEBI" id="CHEBI:57875"/>
        <dbReference type="ChEBI" id="CHEBI:78421"/>
    </reaction>
    <physiologicalReaction direction="left-to-right" evidence="1">
        <dbReference type="Rhea" id="RHEA:41721"/>
    </physiologicalReaction>
</comment>
<comment type="subunit">
    <text evidence="1">Homodimer.</text>
</comment>
<comment type="subcellular location">
    <subcellularLocation>
        <location evidence="1">Cytoplasm</location>
    </subcellularLocation>
    <subcellularLocation>
        <location evidence="1">Cell membrane</location>
    </subcellularLocation>
    <subcellularLocation>
        <location evidence="1">Nucleus membrane</location>
    </subcellularLocation>
    <subcellularLocation>
        <location evidence="1">Endoplasmic reticulum</location>
    </subcellularLocation>
    <text evidence="1">Shows predominantly a cytoplasmic localization with a weak expression in the cell membrane, nuclear membrane and endoplasmic reticulum.</text>
</comment>
<comment type="alternative products">
    <event type="alternative splicing"/>
    <isoform>
        <id>P97823-1</id>
        <name>1</name>
        <sequence type="displayed"/>
    </isoform>
    <isoform>
        <id>P97823-2</id>
        <name>2</name>
        <sequence type="described" ref="VSP_009197"/>
    </isoform>
</comment>
<comment type="miscellaneous">
    <molecule>Isoform 2</molecule>
    <text evidence="6">May be due to an intron retention.</text>
</comment>
<comment type="similarity">
    <text evidence="6">Belongs to the AB hydrolase superfamily. AB hydrolase 2 family.</text>
</comment>
<comment type="sequence caution" evidence="6">
    <conflict type="erroneous initiation">
        <sequence resource="EMBL-CDS" id="BAC34318"/>
    </conflict>
</comment>
<evidence type="ECO:0000250" key="1">
    <source>
        <dbReference type="UniProtKB" id="O75608"/>
    </source>
</evidence>
<evidence type="ECO:0000250" key="2">
    <source>
        <dbReference type="UniProtKB" id="P70470"/>
    </source>
</evidence>
<evidence type="ECO:0000269" key="3">
    <source>
    </source>
</evidence>
<evidence type="ECO:0000269" key="4">
    <source>
    </source>
</evidence>
<evidence type="ECO:0000303" key="5">
    <source>
    </source>
</evidence>
<evidence type="ECO:0000305" key="6"/>
<evidence type="ECO:0007744" key="7">
    <source>
    </source>
</evidence>
<reference key="1">
    <citation type="journal article" date="1997" name="J. Biol. Chem.">
        <title>Cloning, expression, and catalytic mechanism of murine lysophospholipase I.</title>
        <authorList>
            <person name="Wang A."/>
            <person name="Deems R.A."/>
            <person name="Dennis E.A."/>
        </authorList>
    </citation>
    <scope>NUCLEOTIDE SEQUENCE [MRNA] (ISOFORM 1)</scope>
    <scope>PROTEIN SEQUENCE OF 98-105; 150-162 AND 191-201</scope>
    <scope>MUTAGENESIS OF SER-119</scope>
    <scope>FUNCTION</scope>
    <scope>ACTIVE SITE</scope>
    <source>
        <tissue>Macrophage</tissue>
    </source>
</reference>
<reference key="2">
    <citation type="journal article" date="2005" name="Science">
        <title>The transcriptional landscape of the mammalian genome.</title>
        <authorList>
            <person name="Carninci P."/>
            <person name="Kasukawa T."/>
            <person name="Katayama S."/>
            <person name="Gough J."/>
            <person name="Frith M.C."/>
            <person name="Maeda N."/>
            <person name="Oyama R."/>
            <person name="Ravasi T."/>
            <person name="Lenhard B."/>
            <person name="Wells C."/>
            <person name="Kodzius R."/>
            <person name="Shimokawa K."/>
            <person name="Bajic V.B."/>
            <person name="Brenner S.E."/>
            <person name="Batalov S."/>
            <person name="Forrest A.R."/>
            <person name="Zavolan M."/>
            <person name="Davis M.J."/>
            <person name="Wilming L.G."/>
            <person name="Aidinis V."/>
            <person name="Allen J.E."/>
            <person name="Ambesi-Impiombato A."/>
            <person name="Apweiler R."/>
            <person name="Aturaliya R.N."/>
            <person name="Bailey T.L."/>
            <person name="Bansal M."/>
            <person name="Baxter L."/>
            <person name="Beisel K.W."/>
            <person name="Bersano T."/>
            <person name="Bono H."/>
            <person name="Chalk A.M."/>
            <person name="Chiu K.P."/>
            <person name="Choudhary V."/>
            <person name="Christoffels A."/>
            <person name="Clutterbuck D.R."/>
            <person name="Crowe M.L."/>
            <person name="Dalla E."/>
            <person name="Dalrymple B.P."/>
            <person name="de Bono B."/>
            <person name="Della Gatta G."/>
            <person name="di Bernardo D."/>
            <person name="Down T."/>
            <person name="Engstrom P."/>
            <person name="Fagiolini M."/>
            <person name="Faulkner G."/>
            <person name="Fletcher C.F."/>
            <person name="Fukushima T."/>
            <person name="Furuno M."/>
            <person name="Futaki S."/>
            <person name="Gariboldi M."/>
            <person name="Georgii-Hemming P."/>
            <person name="Gingeras T.R."/>
            <person name="Gojobori T."/>
            <person name="Green R.E."/>
            <person name="Gustincich S."/>
            <person name="Harbers M."/>
            <person name="Hayashi Y."/>
            <person name="Hensch T.K."/>
            <person name="Hirokawa N."/>
            <person name="Hill D."/>
            <person name="Huminiecki L."/>
            <person name="Iacono M."/>
            <person name="Ikeo K."/>
            <person name="Iwama A."/>
            <person name="Ishikawa T."/>
            <person name="Jakt M."/>
            <person name="Kanapin A."/>
            <person name="Katoh M."/>
            <person name="Kawasawa Y."/>
            <person name="Kelso J."/>
            <person name="Kitamura H."/>
            <person name="Kitano H."/>
            <person name="Kollias G."/>
            <person name="Krishnan S.P."/>
            <person name="Kruger A."/>
            <person name="Kummerfeld S.K."/>
            <person name="Kurochkin I.V."/>
            <person name="Lareau L.F."/>
            <person name="Lazarevic D."/>
            <person name="Lipovich L."/>
            <person name="Liu J."/>
            <person name="Liuni S."/>
            <person name="McWilliam S."/>
            <person name="Madan Babu M."/>
            <person name="Madera M."/>
            <person name="Marchionni L."/>
            <person name="Matsuda H."/>
            <person name="Matsuzawa S."/>
            <person name="Miki H."/>
            <person name="Mignone F."/>
            <person name="Miyake S."/>
            <person name="Morris K."/>
            <person name="Mottagui-Tabar S."/>
            <person name="Mulder N."/>
            <person name="Nakano N."/>
            <person name="Nakauchi H."/>
            <person name="Ng P."/>
            <person name="Nilsson R."/>
            <person name="Nishiguchi S."/>
            <person name="Nishikawa S."/>
            <person name="Nori F."/>
            <person name="Ohara O."/>
            <person name="Okazaki Y."/>
            <person name="Orlando V."/>
            <person name="Pang K.C."/>
            <person name="Pavan W.J."/>
            <person name="Pavesi G."/>
            <person name="Pesole G."/>
            <person name="Petrovsky N."/>
            <person name="Piazza S."/>
            <person name="Reed J."/>
            <person name="Reid J.F."/>
            <person name="Ring B.Z."/>
            <person name="Ringwald M."/>
            <person name="Rost B."/>
            <person name="Ruan Y."/>
            <person name="Salzberg S.L."/>
            <person name="Sandelin A."/>
            <person name="Schneider C."/>
            <person name="Schoenbach C."/>
            <person name="Sekiguchi K."/>
            <person name="Semple C.A."/>
            <person name="Seno S."/>
            <person name="Sessa L."/>
            <person name="Sheng Y."/>
            <person name="Shibata Y."/>
            <person name="Shimada H."/>
            <person name="Shimada K."/>
            <person name="Silva D."/>
            <person name="Sinclair B."/>
            <person name="Sperling S."/>
            <person name="Stupka E."/>
            <person name="Sugiura K."/>
            <person name="Sultana R."/>
            <person name="Takenaka Y."/>
            <person name="Taki K."/>
            <person name="Tammoja K."/>
            <person name="Tan S.L."/>
            <person name="Tang S."/>
            <person name="Taylor M.S."/>
            <person name="Tegner J."/>
            <person name="Teichmann S.A."/>
            <person name="Ueda H.R."/>
            <person name="van Nimwegen E."/>
            <person name="Verardo R."/>
            <person name="Wei C.L."/>
            <person name="Yagi K."/>
            <person name="Yamanishi H."/>
            <person name="Zabarovsky E."/>
            <person name="Zhu S."/>
            <person name="Zimmer A."/>
            <person name="Hide W."/>
            <person name="Bult C."/>
            <person name="Grimmond S.M."/>
            <person name="Teasdale R.D."/>
            <person name="Liu E.T."/>
            <person name="Brusic V."/>
            <person name="Quackenbush J."/>
            <person name="Wahlestedt C."/>
            <person name="Mattick J.S."/>
            <person name="Hume D.A."/>
            <person name="Kai C."/>
            <person name="Sasaki D."/>
            <person name="Tomaru Y."/>
            <person name="Fukuda S."/>
            <person name="Kanamori-Katayama M."/>
            <person name="Suzuki M."/>
            <person name="Aoki J."/>
            <person name="Arakawa T."/>
            <person name="Iida J."/>
            <person name="Imamura K."/>
            <person name="Itoh M."/>
            <person name="Kato T."/>
            <person name="Kawaji H."/>
            <person name="Kawagashira N."/>
            <person name="Kawashima T."/>
            <person name="Kojima M."/>
            <person name="Kondo S."/>
            <person name="Konno H."/>
            <person name="Nakano K."/>
            <person name="Ninomiya N."/>
            <person name="Nishio T."/>
            <person name="Okada M."/>
            <person name="Plessy C."/>
            <person name="Shibata K."/>
            <person name="Shiraki T."/>
            <person name="Suzuki S."/>
            <person name="Tagami M."/>
            <person name="Waki K."/>
            <person name="Watahiki A."/>
            <person name="Okamura-Oho Y."/>
            <person name="Suzuki H."/>
            <person name="Kawai J."/>
            <person name="Hayashizaki Y."/>
        </authorList>
    </citation>
    <scope>NUCLEOTIDE SEQUENCE [LARGE SCALE MRNA] (ISOFORMS 1 AND 2)</scope>
    <source>
        <strain>C57BL/6J</strain>
        <tissue>Kidney</tissue>
        <tissue>Pancreas</tissue>
    </source>
</reference>
<reference key="3">
    <citation type="journal article" date="2004" name="Genome Res.">
        <title>The status, quality, and expansion of the NIH full-length cDNA project: the Mammalian Gene Collection (MGC).</title>
        <authorList>
            <consortium name="The MGC Project Team"/>
        </authorList>
    </citation>
    <scope>NUCLEOTIDE SEQUENCE [LARGE SCALE MRNA] (ISOFORM 1)</scope>
    <source>
        <tissue>Kidney</tissue>
        <tissue>Osteoblast</tissue>
    </source>
</reference>
<reference key="4">
    <citation type="submission" date="2007-07" db="UniProtKB">
        <authorList>
            <person name="Lubec G."/>
            <person name="Yang J.W."/>
            <person name="Zigmond M."/>
        </authorList>
    </citation>
    <scope>PROTEIN SEQUENCE OF 136-149</scope>
    <source>
        <tissue>Brain</tissue>
    </source>
</reference>
<reference key="5">
    <citation type="journal article" date="1997" name="J. Biol. Chem.">
        <title>Regiospecificity and catalytic triad of lysophospholipase I.</title>
        <authorList>
            <person name="Wang A."/>
            <person name="Loo R."/>
            <person name="Chen Z."/>
            <person name="Dennis E.A."/>
        </authorList>
    </citation>
    <scope>MUTAGENESIS OF ASP-174 AND HIS-208</scope>
    <scope>ACTIVE SITE</scope>
</reference>
<reference key="6">
    <citation type="journal article" date="2010" name="Cell">
        <title>A tissue-specific atlas of mouse protein phosphorylation and expression.</title>
        <authorList>
            <person name="Huttlin E.L."/>
            <person name="Jedrychowski M.P."/>
            <person name="Elias J.E."/>
            <person name="Goswami T."/>
            <person name="Rad R."/>
            <person name="Beausoleil S.A."/>
            <person name="Villen J."/>
            <person name="Haas W."/>
            <person name="Sowa M.E."/>
            <person name="Gygi S.P."/>
        </authorList>
    </citation>
    <scope>IDENTIFICATION BY MASS SPECTROMETRY [LARGE SCALE ANALYSIS]</scope>
    <source>
        <tissue>Brain</tissue>
        <tissue>Brown adipose tissue</tissue>
        <tissue>Heart</tissue>
        <tissue>Kidney</tissue>
        <tissue>Liver</tissue>
        <tissue>Lung</tissue>
        <tissue>Pancreas</tissue>
        <tissue>Spleen</tissue>
        <tissue>Testis</tissue>
    </source>
</reference>
<reference key="7">
    <citation type="journal article" date="2013" name="Proc. Natl. Acad. Sci. U.S.A.">
        <title>Label-free quantitative proteomics of the lysine acetylome in mitochondria identifies substrates of SIRT3 in metabolic pathways.</title>
        <authorList>
            <person name="Rardin M.J."/>
            <person name="Newman J.C."/>
            <person name="Held J.M."/>
            <person name="Cusack M.P."/>
            <person name="Sorensen D.J."/>
            <person name="Li B."/>
            <person name="Schilling B."/>
            <person name="Mooney S.D."/>
            <person name="Kahn C.R."/>
            <person name="Verdin E."/>
            <person name="Gibson B.W."/>
        </authorList>
    </citation>
    <scope>ACETYLATION [LARGE SCALE ANALYSIS] AT LYS-224</scope>
    <scope>IDENTIFICATION BY MASS SPECTROMETRY [LARGE SCALE ANALYSIS]</scope>
    <source>
        <tissue>Liver</tissue>
    </source>
</reference>
<feature type="chain" id="PRO_0000102268" description="Acyl-protein thioesterase 1">
    <location>
        <begin position="1"/>
        <end position="230"/>
    </location>
</feature>
<feature type="active site" description="Charge relay system" evidence="3">
    <location>
        <position position="119"/>
    </location>
</feature>
<feature type="active site" description="Charge relay system" evidence="4">
    <location>
        <position position="174"/>
    </location>
</feature>
<feature type="active site" description="Charge relay system" evidence="4">
    <location>
        <position position="208"/>
    </location>
</feature>
<feature type="modified residue" description="N6-acetyllysine" evidence="7">
    <location>
        <position position="224"/>
    </location>
</feature>
<feature type="splice variant" id="VSP_009197" description="In isoform 2." evidence="5">
    <original>EMMDVKHFIDKLLPPID</original>
    <variation>VGVSGSSE</variation>
    <location>
        <begin position="214"/>
        <end position="230"/>
    </location>
</feature>
<feature type="mutagenesis site" description="Abolishes lysophospholipase activity." evidence="3">
    <original>S</original>
    <variation>A</variation>
    <location>
        <position position="119"/>
    </location>
</feature>
<feature type="mutagenesis site" description="Abolishes lysophospholipase activity." evidence="4">
    <original>D</original>
    <variation>A</variation>
    <location>
        <position position="174"/>
    </location>
</feature>
<feature type="mutagenesis site" description="Abolishes lysophospholipase activity." evidence="4">
    <original>H</original>
    <variation>A</variation>
    <location>
        <position position="208"/>
    </location>
</feature>
<feature type="sequence conflict" description="In Ref. 3; AAH52848." evidence="6" ref="3">
    <original>P</original>
    <variation>L</variation>
    <location>
        <position position="156"/>
    </location>
</feature>
<gene>
    <name type="primary">Lypla1</name>
    <name type="synonym">Apt1</name>
    <name type="synonym">Pla1a</name>
</gene>
<sequence>MCGNNMSAPMPAVVPAARKATAAVIFLHGLGDTGHGWAEAFAGIKSPHIKYICPHAPVMPVTLNMNMAMPSWFDIVGLSPDSQEDESGIKQAAETVKALIDQEVKNGIPSNRIILGGFSQGGALSLYTALTTQQKLAGVTALSCWLPLRASFSQGPINSANRDISVLQCHGDCDPLVPLMFGSLTVERLKALINPANVTFKIYEGMMHSSCQQEMMDVKHFIDKLLPPID</sequence>
<protein>
    <recommendedName>
        <fullName>Acyl-protein thioesterase 1</fullName>
        <shortName>APT-1</shortName>
        <ecNumber>3.1.2.-</ecNumber>
    </recommendedName>
    <alternativeName>
        <fullName>Lysophospholipase 1</fullName>
    </alternativeName>
    <alternativeName>
        <fullName>Lysophospholipase I</fullName>
        <shortName>LPL-I</shortName>
        <shortName>LysoPLA I</shortName>
    </alternativeName>
    <alternativeName>
        <fullName evidence="6">Palmitoyl-protein hydrolase</fullName>
        <ecNumber evidence="1">3.1.2.22</ecNumber>
    </alternativeName>
</protein>